<comment type="subcellular location">
    <subcellularLocation>
        <location evidence="1">Cell membrane</location>
        <topology evidence="1">Multi-pass membrane protein</topology>
    </subcellularLocation>
</comment>
<comment type="similarity">
    <text evidence="1">Belongs to the UPF0353 family.</text>
</comment>
<accession>A5U2I5</accession>
<proteinExistence type="inferred from homology"/>
<name>Y1491_MYCTA</name>
<protein>
    <recommendedName>
        <fullName evidence="1">UPF0353 protein MRA_1491</fullName>
    </recommendedName>
</protein>
<reference key="1">
    <citation type="journal article" date="2008" name="PLoS ONE">
        <title>Genetic basis of virulence attenuation revealed by comparative genomic analysis of Mycobacterium tuberculosis strain H37Ra versus H37Rv.</title>
        <authorList>
            <person name="Zheng H."/>
            <person name="Lu L."/>
            <person name="Wang B."/>
            <person name="Pu S."/>
            <person name="Zhang X."/>
            <person name="Zhu G."/>
            <person name="Shi W."/>
            <person name="Zhang L."/>
            <person name="Wang H."/>
            <person name="Wang S."/>
            <person name="Zhao G."/>
            <person name="Zhang Y."/>
        </authorList>
    </citation>
    <scope>NUCLEOTIDE SEQUENCE [LARGE SCALE GENOMIC DNA]</scope>
    <source>
        <strain>ATCC 25177 / H37Ra</strain>
    </source>
</reference>
<keyword id="KW-1003">Cell membrane</keyword>
<keyword id="KW-0472">Membrane</keyword>
<keyword id="KW-1185">Reference proteome</keyword>
<keyword id="KW-0812">Transmembrane</keyword>
<keyword id="KW-1133">Transmembrane helix</keyword>
<evidence type="ECO:0000255" key="1">
    <source>
        <dbReference type="HAMAP-Rule" id="MF_01340"/>
    </source>
</evidence>
<gene>
    <name type="ordered locus">MRA_1491</name>
</gene>
<sequence>MTLPLLGPMTLSGFAHSWFFLFLFVVAGLVALYILMQLARQRRMLRFANMELLESVAPKRPSRWRHVPAILLVLSLLLFTIAMAGPTHDVRIPRNRAVVMLVIDVSQSMRATDVEPSRMVAAQEAAKQFADELTPGINLGLIAYAGTATVLVSPTTNREATKNALDKLQFADRTATGEAIFTALQAIATVGAVIGGGDTPPPARIVLFSDGKETMPTNPDNPKGAYTAARTAKDQGVPISTISFGTPYGFVEINDQRQPVPVDDETMKKVAQLSGGNSYNAATLAELRAVYSSLQQQIGYETIKGDASVGWLRLGALALALAALAALLINRRLPT</sequence>
<feature type="chain" id="PRO_1000067656" description="UPF0353 protein MRA_1491">
    <location>
        <begin position="1"/>
        <end position="335"/>
    </location>
</feature>
<feature type="transmembrane region" description="Helical" evidence="1">
    <location>
        <begin position="18"/>
        <end position="38"/>
    </location>
</feature>
<feature type="transmembrane region" description="Helical" evidence="1">
    <location>
        <begin position="67"/>
        <end position="87"/>
    </location>
</feature>
<feature type="transmembrane region" description="Helical" evidence="1">
    <location>
        <begin position="309"/>
        <end position="329"/>
    </location>
</feature>
<feature type="domain" description="VWFA" evidence="1">
    <location>
        <begin position="98"/>
        <end position="294"/>
    </location>
</feature>
<organism>
    <name type="scientific">Mycobacterium tuberculosis (strain ATCC 25177 / H37Ra)</name>
    <dbReference type="NCBI Taxonomy" id="419947"/>
    <lineage>
        <taxon>Bacteria</taxon>
        <taxon>Bacillati</taxon>
        <taxon>Actinomycetota</taxon>
        <taxon>Actinomycetes</taxon>
        <taxon>Mycobacteriales</taxon>
        <taxon>Mycobacteriaceae</taxon>
        <taxon>Mycobacterium</taxon>
        <taxon>Mycobacterium tuberculosis complex</taxon>
    </lineage>
</organism>
<dbReference type="EMBL" id="CP000611">
    <property type="protein sequence ID" value="ABQ73235.1"/>
    <property type="molecule type" value="Genomic_DNA"/>
</dbReference>
<dbReference type="RefSeq" id="WP_003407530.1">
    <property type="nucleotide sequence ID" value="NZ_CP016972.1"/>
</dbReference>
<dbReference type="SMR" id="A5U2I5"/>
<dbReference type="KEGG" id="mra:MRA_1491"/>
<dbReference type="eggNOG" id="COG2304">
    <property type="taxonomic scope" value="Bacteria"/>
</dbReference>
<dbReference type="HOGENOM" id="CLU_024570_2_0_11"/>
<dbReference type="Proteomes" id="UP000001988">
    <property type="component" value="Chromosome"/>
</dbReference>
<dbReference type="GO" id="GO:0005886">
    <property type="term" value="C:plasma membrane"/>
    <property type="evidence" value="ECO:0007669"/>
    <property type="project" value="UniProtKB-SubCell"/>
</dbReference>
<dbReference type="CDD" id="cd00198">
    <property type="entry name" value="vWFA"/>
    <property type="match status" value="1"/>
</dbReference>
<dbReference type="FunFam" id="3.40.50.410:FF:000078">
    <property type="entry name" value="UPF0353 protein RN09_1826"/>
    <property type="match status" value="1"/>
</dbReference>
<dbReference type="Gene3D" id="3.40.50.410">
    <property type="entry name" value="von Willebrand factor, type A domain"/>
    <property type="match status" value="1"/>
</dbReference>
<dbReference type="HAMAP" id="MF_01340">
    <property type="entry name" value="UPF0353"/>
    <property type="match status" value="1"/>
</dbReference>
<dbReference type="InterPro" id="IPR024163">
    <property type="entry name" value="Aerotolerance_reg_N"/>
</dbReference>
<dbReference type="InterPro" id="IPR022933">
    <property type="entry name" value="UPF0353"/>
</dbReference>
<dbReference type="InterPro" id="IPR050768">
    <property type="entry name" value="UPF0353/GerABKA_families"/>
</dbReference>
<dbReference type="InterPro" id="IPR002035">
    <property type="entry name" value="VWF_A"/>
</dbReference>
<dbReference type="InterPro" id="IPR036465">
    <property type="entry name" value="vWFA_dom_sf"/>
</dbReference>
<dbReference type="NCBIfam" id="NF010238">
    <property type="entry name" value="PRK13685.1"/>
    <property type="match status" value="1"/>
</dbReference>
<dbReference type="PANTHER" id="PTHR22550:SF5">
    <property type="entry name" value="LEUCINE ZIPPER PROTEIN 4"/>
    <property type="match status" value="1"/>
</dbReference>
<dbReference type="PANTHER" id="PTHR22550">
    <property type="entry name" value="SPORE GERMINATION PROTEIN"/>
    <property type="match status" value="1"/>
</dbReference>
<dbReference type="Pfam" id="PF07584">
    <property type="entry name" value="BatA"/>
    <property type="match status" value="1"/>
</dbReference>
<dbReference type="Pfam" id="PF13519">
    <property type="entry name" value="VWA_2"/>
    <property type="match status" value="1"/>
</dbReference>
<dbReference type="SMART" id="SM00327">
    <property type="entry name" value="VWA"/>
    <property type="match status" value="1"/>
</dbReference>
<dbReference type="SUPFAM" id="SSF53300">
    <property type="entry name" value="vWA-like"/>
    <property type="match status" value="1"/>
</dbReference>
<dbReference type="PROSITE" id="PS50234">
    <property type="entry name" value="VWFA"/>
    <property type="match status" value="1"/>
</dbReference>